<gene>
    <name type="primary">KBTB1</name>
    <name type="ORF">A55R</name>
</gene>
<keyword id="KW-0244">Early protein</keyword>
<keyword id="KW-1035">Host cytoplasm</keyword>
<keyword id="KW-0945">Host-virus interaction</keyword>
<keyword id="KW-0880">Kelch repeat</keyword>
<keyword id="KW-1123">Modulation of host E3 ubiquitin ligases by virus</keyword>
<keyword id="KW-1130">Modulation of host ubiquitin pathway by virus</keyword>
<keyword id="KW-1185">Reference proteome</keyword>
<keyword id="KW-0677">Repeat</keyword>
<keyword id="KW-0833">Ubl conjugation pathway</keyword>
<sequence>MNNSSELIAVINGFRNSGRFCDINIVINDERINAHKLILSGASEYFSILFSNNFIDSNEYEVNLSHLDYQSVNDLIDYIYGIPLSLTNDNVKYILSTADFLQIGSAITECENYILKNLCSKNCIDFYIYADKYNNKKIESASFNTILQNILRLINDENFKYLTEESMIKILSDDMLNIKNEDFAPLILIKWLESTQQSCTVELLKCLRISLLSPQVIKSLYSHRLVSSIYECITFLNNIAFLDESFPRYHSIELISIGISNSRDKISINCYNHKKNTWEMISSRRYRCSFAVAVLDNIIYMMGGYDQSPYRSSKVIAYNTCTNSWIYDIPELKYPRSNCGGLADDEYIYCIGGIRDQDSSLTSSIDKWKPSKPYWQKYAKMREPKCDMGVAMLNGLIYVIGGIVKGDTCTDALESLSEDGWMKHQRLPIKMSNMSTIVHDGKIYISGGYNNSSVVNVISNLVLSYNPIYDEWTKLSSLNIPRINPALWSAHNKLYVGGGISDDVRTNTSETYDKEKDCWTLDNGHVLPRNYIMYKCEPIKHKYPLEKTQYTNDFLKYLESFIGS</sequence>
<comment type="function">
    <text>Probable substrate-specific adapter of CUL3-containing E3 ubiquitin-protein ligases which mediate the ubiquitination and subsequent proteasomal degradation of host target proteins.</text>
</comment>
<comment type="subunit">
    <text evidence="1">Interacts (via BTB domain) with host CUL3.</text>
</comment>
<comment type="subcellular location">
    <subcellularLocation>
        <location evidence="1">Host cytoplasm</location>
    </subcellularLocation>
</comment>
<comment type="domain">
    <text evidence="1">The BTB domain is responsible for the interaction with CUL3 while the Kelch repeat domains supposely serve to recruit the cellular substrates.</text>
</comment>
<comment type="similarity">
    <text evidence="3">Belongs to the poxviruses Kelch family.</text>
</comment>
<evidence type="ECO:0000250" key="1"/>
<evidence type="ECO:0000255" key="2">
    <source>
        <dbReference type="PROSITE-ProRule" id="PRU00037"/>
    </source>
</evidence>
<evidence type="ECO:0000305" key="3"/>
<protein>
    <recommendedName>
        <fullName>Kelch repeat and BTB domain-containing protein 1</fullName>
    </recommendedName>
</protein>
<name>KBTB1_VACCC</name>
<dbReference type="EMBL" id="M35027">
    <property type="protein sequence ID" value="AAA48190.1"/>
    <property type="molecule type" value="Genomic_DNA"/>
</dbReference>
<dbReference type="PIR" id="C42523">
    <property type="entry name" value="C42523"/>
</dbReference>
<dbReference type="SMR" id="P21073"/>
<dbReference type="Proteomes" id="UP000008269">
    <property type="component" value="Segment"/>
</dbReference>
<dbReference type="GO" id="GO:0030430">
    <property type="term" value="C:host cell cytoplasm"/>
    <property type="evidence" value="ECO:0007669"/>
    <property type="project" value="UniProtKB-SubCell"/>
</dbReference>
<dbReference type="GO" id="GO:0039648">
    <property type="term" value="P:symbiont-mediated perturbation of host ubiquitin-like protein modification"/>
    <property type="evidence" value="ECO:0007669"/>
    <property type="project" value="UniProtKB-KW"/>
</dbReference>
<dbReference type="Gene3D" id="1.25.40.420">
    <property type="match status" value="1"/>
</dbReference>
<dbReference type="Gene3D" id="2.120.10.80">
    <property type="entry name" value="Kelch-type beta propeller"/>
    <property type="match status" value="1"/>
</dbReference>
<dbReference type="Gene3D" id="3.30.710.10">
    <property type="entry name" value="Potassium Channel Kv1.1, Chain A"/>
    <property type="match status" value="1"/>
</dbReference>
<dbReference type="InterPro" id="IPR011705">
    <property type="entry name" value="BACK"/>
</dbReference>
<dbReference type="InterPro" id="IPR000210">
    <property type="entry name" value="BTB/POZ_dom"/>
</dbReference>
<dbReference type="InterPro" id="IPR015915">
    <property type="entry name" value="Kelch-typ_b-propeller"/>
</dbReference>
<dbReference type="InterPro" id="IPR006652">
    <property type="entry name" value="Kelch_1"/>
</dbReference>
<dbReference type="InterPro" id="IPR011333">
    <property type="entry name" value="SKP1/BTB/POZ_sf"/>
</dbReference>
<dbReference type="InterPro" id="IPR024182">
    <property type="entry name" value="Vaccinia_A55R"/>
</dbReference>
<dbReference type="PANTHER" id="PTHR45632:SF3">
    <property type="entry name" value="KELCH-LIKE PROTEIN 32"/>
    <property type="match status" value="1"/>
</dbReference>
<dbReference type="PANTHER" id="PTHR45632">
    <property type="entry name" value="LD33804P"/>
    <property type="match status" value="1"/>
</dbReference>
<dbReference type="Pfam" id="PF07707">
    <property type="entry name" value="BACK"/>
    <property type="match status" value="1"/>
</dbReference>
<dbReference type="Pfam" id="PF00651">
    <property type="entry name" value="BTB"/>
    <property type="match status" value="1"/>
</dbReference>
<dbReference type="Pfam" id="PF01344">
    <property type="entry name" value="Kelch_1"/>
    <property type="match status" value="3"/>
</dbReference>
<dbReference type="PIRSF" id="PIRSF003716">
    <property type="entry name" value="VAC_F3L"/>
    <property type="match status" value="1"/>
</dbReference>
<dbReference type="SMART" id="SM00875">
    <property type="entry name" value="BACK"/>
    <property type="match status" value="1"/>
</dbReference>
<dbReference type="SMART" id="SM00225">
    <property type="entry name" value="BTB"/>
    <property type="match status" value="1"/>
</dbReference>
<dbReference type="SMART" id="SM00612">
    <property type="entry name" value="Kelch"/>
    <property type="match status" value="5"/>
</dbReference>
<dbReference type="SUPFAM" id="SSF117281">
    <property type="entry name" value="Kelch motif"/>
    <property type="match status" value="1"/>
</dbReference>
<dbReference type="SUPFAM" id="SSF54695">
    <property type="entry name" value="POZ domain"/>
    <property type="match status" value="1"/>
</dbReference>
<dbReference type="PROSITE" id="PS50097">
    <property type="entry name" value="BTB"/>
    <property type="match status" value="1"/>
</dbReference>
<feature type="chain" id="PRO_0000119150" description="Kelch repeat and BTB domain-containing protein 1">
    <location>
        <begin position="1"/>
        <end position="564"/>
    </location>
</feature>
<feature type="domain" description="BTB" evidence="2">
    <location>
        <begin position="21"/>
        <end position="88"/>
    </location>
</feature>
<feature type="repeat" description="Kelch 1">
    <location>
        <begin position="252"/>
        <end position="297"/>
    </location>
</feature>
<feature type="repeat" description="Kelch 2">
    <location>
        <begin position="298"/>
        <end position="346"/>
    </location>
</feature>
<feature type="repeat" description="Kelch 3">
    <location>
        <begin position="347"/>
        <end position="395"/>
    </location>
</feature>
<feature type="repeat" description="Kelch 4">
    <location>
        <begin position="397"/>
        <end position="441"/>
    </location>
</feature>
<feature type="repeat" description="Kelch 5">
    <location>
        <begin position="442"/>
        <end position="492"/>
    </location>
</feature>
<feature type="repeat" description="Kelch 6">
    <location>
        <begin position="494"/>
        <end position="539"/>
    </location>
</feature>
<organismHost>
    <name type="scientific">Homo sapiens</name>
    <name type="common">Human</name>
    <dbReference type="NCBI Taxonomy" id="9606"/>
</organismHost>
<proteinExistence type="inferred from homology"/>
<organism>
    <name type="scientific">Vaccinia virus (strain Copenhagen)</name>
    <name type="common">VACV</name>
    <dbReference type="NCBI Taxonomy" id="10249"/>
    <lineage>
        <taxon>Viruses</taxon>
        <taxon>Varidnaviria</taxon>
        <taxon>Bamfordvirae</taxon>
        <taxon>Nucleocytoviricota</taxon>
        <taxon>Pokkesviricetes</taxon>
        <taxon>Chitovirales</taxon>
        <taxon>Poxviridae</taxon>
        <taxon>Chordopoxvirinae</taxon>
        <taxon>Orthopoxvirus</taxon>
        <taxon>Vaccinia virus</taxon>
    </lineage>
</organism>
<reference key="1">
    <citation type="journal article" date="1990" name="Virology">
        <title>The complete DNA sequence of vaccinia virus.</title>
        <authorList>
            <person name="Goebel S.J."/>
            <person name="Johnson G.P."/>
            <person name="Perkus M.E."/>
            <person name="Davis S.W."/>
            <person name="Winslow J.P."/>
            <person name="Paoletti E."/>
        </authorList>
    </citation>
    <scope>NUCLEOTIDE SEQUENCE [LARGE SCALE GENOMIC DNA]</scope>
</reference>
<reference key="2">
    <citation type="journal article" date="1990" name="Virology">
        <title>Appendix to 'The complete DNA sequence of vaccinia virus'.</title>
        <authorList>
            <person name="Goebel S.J."/>
            <person name="Johnson G.P."/>
            <person name="Perkus M.E."/>
            <person name="Davis S.W."/>
            <person name="Winslow J.P."/>
            <person name="Paoletti E."/>
        </authorList>
    </citation>
    <scope>COMPLETE GENOME</scope>
</reference>
<accession>P21073</accession>